<feature type="chain" id="PRO_1000139615" description="Alkanesulfonate monooxygenase">
    <location>
        <begin position="1"/>
        <end position="386"/>
    </location>
</feature>
<gene>
    <name evidence="1" type="primary">ssuD</name>
    <name type="ordered locus">Daci_4638</name>
</gene>
<dbReference type="EC" id="1.14.14.5" evidence="1"/>
<dbReference type="EMBL" id="CP000884">
    <property type="protein sequence ID" value="ABX37267.1"/>
    <property type="molecule type" value="Genomic_DNA"/>
</dbReference>
<dbReference type="RefSeq" id="WP_012206437.1">
    <property type="nucleotide sequence ID" value="NC_010002.1"/>
</dbReference>
<dbReference type="SMR" id="A9C3F6"/>
<dbReference type="STRING" id="398578.Daci_4638"/>
<dbReference type="GeneID" id="94691455"/>
<dbReference type="KEGG" id="dac:Daci_4638"/>
<dbReference type="eggNOG" id="COG2141">
    <property type="taxonomic scope" value="Bacteria"/>
</dbReference>
<dbReference type="HOGENOM" id="CLU_027853_1_0_4"/>
<dbReference type="Proteomes" id="UP000000784">
    <property type="component" value="Chromosome"/>
</dbReference>
<dbReference type="GO" id="GO:0008726">
    <property type="term" value="F:alkanesulfonate monooxygenase activity"/>
    <property type="evidence" value="ECO:0007669"/>
    <property type="project" value="UniProtKB-UniRule"/>
</dbReference>
<dbReference type="GO" id="GO:0046306">
    <property type="term" value="P:alkanesulfonate catabolic process"/>
    <property type="evidence" value="ECO:0007669"/>
    <property type="project" value="TreeGrafter"/>
</dbReference>
<dbReference type="CDD" id="cd01094">
    <property type="entry name" value="Alkanesulfonate_monoxygenase"/>
    <property type="match status" value="1"/>
</dbReference>
<dbReference type="Gene3D" id="3.20.20.30">
    <property type="entry name" value="Luciferase-like domain"/>
    <property type="match status" value="1"/>
</dbReference>
<dbReference type="HAMAP" id="MF_01229">
    <property type="entry name" value="Alkanesulf_monooxygen"/>
    <property type="match status" value="1"/>
</dbReference>
<dbReference type="InterPro" id="IPR019911">
    <property type="entry name" value="Alkanesulphonate_mOase_FMN-dep"/>
</dbReference>
<dbReference type="InterPro" id="IPR011251">
    <property type="entry name" value="Luciferase-like_dom"/>
</dbReference>
<dbReference type="InterPro" id="IPR036661">
    <property type="entry name" value="Luciferase-like_sf"/>
</dbReference>
<dbReference type="InterPro" id="IPR050172">
    <property type="entry name" value="SsuD_RutA_monooxygenase"/>
</dbReference>
<dbReference type="NCBIfam" id="TIGR03565">
    <property type="entry name" value="alk_sulf_monoox"/>
    <property type="match status" value="1"/>
</dbReference>
<dbReference type="NCBIfam" id="NF001939">
    <property type="entry name" value="PRK00719.1"/>
    <property type="match status" value="1"/>
</dbReference>
<dbReference type="PANTHER" id="PTHR42847">
    <property type="entry name" value="ALKANESULFONATE MONOOXYGENASE"/>
    <property type="match status" value="1"/>
</dbReference>
<dbReference type="PANTHER" id="PTHR42847:SF4">
    <property type="entry name" value="ALKANESULFONATE MONOOXYGENASE-RELATED"/>
    <property type="match status" value="1"/>
</dbReference>
<dbReference type="Pfam" id="PF00296">
    <property type="entry name" value="Bac_luciferase"/>
    <property type="match status" value="1"/>
</dbReference>
<dbReference type="SUPFAM" id="SSF51679">
    <property type="entry name" value="Bacterial luciferase-like"/>
    <property type="match status" value="1"/>
</dbReference>
<name>SSUD_DELAS</name>
<organism>
    <name type="scientific">Delftia acidovorans (strain DSM 14801 / SPH-1)</name>
    <dbReference type="NCBI Taxonomy" id="398578"/>
    <lineage>
        <taxon>Bacteria</taxon>
        <taxon>Pseudomonadati</taxon>
        <taxon>Pseudomonadota</taxon>
        <taxon>Betaproteobacteria</taxon>
        <taxon>Burkholderiales</taxon>
        <taxon>Comamonadaceae</taxon>
        <taxon>Delftia</taxon>
    </lineage>
</organism>
<comment type="function">
    <text evidence="1">Catalyzes the desulfonation of aliphatic sulfonates.</text>
</comment>
<comment type="catalytic activity">
    <reaction evidence="1">
        <text>an alkanesulfonate + FMNH2 + O2 = an aldehyde + FMN + sulfite + H2O + 2 H(+)</text>
        <dbReference type="Rhea" id="RHEA:23064"/>
        <dbReference type="ChEBI" id="CHEBI:15377"/>
        <dbReference type="ChEBI" id="CHEBI:15378"/>
        <dbReference type="ChEBI" id="CHEBI:15379"/>
        <dbReference type="ChEBI" id="CHEBI:17359"/>
        <dbReference type="ChEBI" id="CHEBI:17478"/>
        <dbReference type="ChEBI" id="CHEBI:57618"/>
        <dbReference type="ChEBI" id="CHEBI:58210"/>
        <dbReference type="ChEBI" id="CHEBI:134249"/>
        <dbReference type="EC" id="1.14.14.5"/>
    </reaction>
</comment>
<comment type="similarity">
    <text evidence="1">Belongs to the SsuD family.</text>
</comment>
<keyword id="KW-0285">Flavoprotein</keyword>
<keyword id="KW-0288">FMN</keyword>
<keyword id="KW-0503">Monooxygenase</keyword>
<keyword id="KW-0560">Oxidoreductase</keyword>
<keyword id="KW-1185">Reference proteome</keyword>
<accession>A9C3F6</accession>
<protein>
    <recommendedName>
        <fullName evidence="1">Alkanesulfonate monooxygenase</fullName>
        <ecNumber evidence="1">1.14.14.5</ecNumber>
    </recommendedName>
    <alternativeName>
        <fullName evidence="1">FMNH2-dependent aliphatic sulfonate monooxygenase</fullName>
    </alternativeName>
</protein>
<evidence type="ECO:0000255" key="1">
    <source>
        <dbReference type="HAMAP-Rule" id="MF_01229"/>
    </source>
</evidence>
<proteinExistence type="inferred from homology"/>
<reference key="1">
    <citation type="submission" date="2007-11" db="EMBL/GenBank/DDBJ databases">
        <title>Complete sequence of Delftia acidovorans DSM 14801 / SPH-1.</title>
        <authorList>
            <person name="Copeland A."/>
            <person name="Lucas S."/>
            <person name="Lapidus A."/>
            <person name="Barry K."/>
            <person name="Glavina del Rio T."/>
            <person name="Dalin E."/>
            <person name="Tice H."/>
            <person name="Pitluck S."/>
            <person name="Lowry S."/>
            <person name="Clum A."/>
            <person name="Schmutz J."/>
            <person name="Larimer F."/>
            <person name="Land M."/>
            <person name="Hauser L."/>
            <person name="Kyrpides N."/>
            <person name="Kim E."/>
            <person name="Schleheck D."/>
            <person name="Richardson P."/>
        </authorList>
    </citation>
    <scope>NUCLEOTIDE SEQUENCE [LARGE SCALE GENOMIC DNA]</scope>
    <source>
        <strain>DSM 14801 / SPH-1</strain>
    </source>
</reference>
<sequence length="386" mass="42131">MQVFWFIPTHGDSRYLGTAEGARPLSHDYVKQVAIAADSLGYEGVLIPTGRSCEDPWVVASSLIPVTRRLKFLVAVRPGLHQPSLAARMAASFDRLSGGRLLINLVTGGDRAELEGDGVFLDHAQRYEQSAEFIRIWREILERSHEGGTLDYEGEHLSVKGAKLLFPPLQKPYPPVYFGGSSEAAHDLAAEQVDAYLTWGEPPAEVAKKIADVREKAARHGRSVKFGIRLHVIVRETEDEAWADADRLISRLKDETVVQAQAAFARMDSEGQRRMAALHAGGSRRTRAELEISPNLWAGVGLVRGGAGTALVGDAQTVADRIKEYADLGIDTFVLSGYPHLEEAYRFAELVFPLLPLSVRDRLAGGVGGPLGETVANLYSPRASQS</sequence>